<accession>A3NXK5</accession>
<proteinExistence type="inferred from homology"/>
<keyword id="KW-0963">Cytoplasm</keyword>
<keyword id="KW-0227">DNA damage</keyword>
<keyword id="KW-0228">DNA excision</keyword>
<keyword id="KW-0234">DNA repair</keyword>
<keyword id="KW-0267">Excision nuclease</keyword>
<keyword id="KW-0742">SOS response</keyword>
<evidence type="ECO:0000255" key="1">
    <source>
        <dbReference type="HAMAP-Rule" id="MF_00203"/>
    </source>
</evidence>
<evidence type="ECO:0000256" key="2">
    <source>
        <dbReference type="SAM" id="MobiDB-lite"/>
    </source>
</evidence>
<gene>
    <name evidence="1" type="primary">uvrC</name>
    <name type="ordered locus">BURPS1106A_2829</name>
</gene>
<organism>
    <name type="scientific">Burkholderia pseudomallei (strain 1106a)</name>
    <dbReference type="NCBI Taxonomy" id="357348"/>
    <lineage>
        <taxon>Bacteria</taxon>
        <taxon>Pseudomonadati</taxon>
        <taxon>Pseudomonadota</taxon>
        <taxon>Betaproteobacteria</taxon>
        <taxon>Burkholderiales</taxon>
        <taxon>Burkholderiaceae</taxon>
        <taxon>Burkholderia</taxon>
        <taxon>pseudomallei group</taxon>
    </lineage>
</organism>
<protein>
    <recommendedName>
        <fullName evidence="1">UvrABC system protein C</fullName>
        <shortName evidence="1">Protein UvrC</shortName>
    </recommendedName>
    <alternativeName>
        <fullName evidence="1">Excinuclease ABC subunit C</fullName>
    </alternativeName>
</protein>
<comment type="function">
    <text evidence="1">The UvrABC repair system catalyzes the recognition and processing of DNA lesions. UvrC both incises the 5' and 3' sides of the lesion. The N-terminal half is responsible for the 3' incision and the C-terminal half is responsible for the 5' incision.</text>
</comment>
<comment type="subunit">
    <text evidence="1">Interacts with UvrB in an incision complex.</text>
</comment>
<comment type="subcellular location">
    <subcellularLocation>
        <location evidence="1">Cytoplasm</location>
    </subcellularLocation>
</comment>
<comment type="similarity">
    <text evidence="1">Belongs to the UvrC family.</text>
</comment>
<name>UVRC_BURP0</name>
<feature type="chain" id="PRO_1000077762" description="UvrABC system protein C">
    <location>
        <begin position="1"/>
        <end position="747"/>
    </location>
</feature>
<feature type="domain" description="GIY-YIG" evidence="1">
    <location>
        <begin position="22"/>
        <end position="100"/>
    </location>
</feature>
<feature type="domain" description="UVR" evidence="1">
    <location>
        <begin position="209"/>
        <end position="244"/>
    </location>
</feature>
<feature type="region of interest" description="Disordered" evidence="2">
    <location>
        <begin position="363"/>
        <end position="400"/>
    </location>
</feature>
<feature type="compositionally biased region" description="Basic and acidic residues" evidence="2">
    <location>
        <begin position="370"/>
        <end position="387"/>
    </location>
</feature>
<feature type="compositionally biased region" description="Low complexity" evidence="2">
    <location>
        <begin position="388"/>
        <end position="400"/>
    </location>
</feature>
<dbReference type="EMBL" id="CP000572">
    <property type="protein sequence ID" value="ABN91423.1"/>
    <property type="molecule type" value="Genomic_DNA"/>
</dbReference>
<dbReference type="RefSeq" id="WP_004527460.1">
    <property type="nucleotide sequence ID" value="NC_009076.1"/>
</dbReference>
<dbReference type="SMR" id="A3NXK5"/>
<dbReference type="GeneID" id="93061000"/>
<dbReference type="KEGG" id="bpl:BURPS1106A_2829"/>
<dbReference type="HOGENOM" id="CLU_014841_3_0_4"/>
<dbReference type="Proteomes" id="UP000006738">
    <property type="component" value="Chromosome I"/>
</dbReference>
<dbReference type="GO" id="GO:0005737">
    <property type="term" value="C:cytoplasm"/>
    <property type="evidence" value="ECO:0007669"/>
    <property type="project" value="UniProtKB-SubCell"/>
</dbReference>
<dbReference type="GO" id="GO:0009380">
    <property type="term" value="C:excinuclease repair complex"/>
    <property type="evidence" value="ECO:0007669"/>
    <property type="project" value="InterPro"/>
</dbReference>
<dbReference type="GO" id="GO:0003677">
    <property type="term" value="F:DNA binding"/>
    <property type="evidence" value="ECO:0007669"/>
    <property type="project" value="UniProtKB-UniRule"/>
</dbReference>
<dbReference type="GO" id="GO:0009381">
    <property type="term" value="F:excinuclease ABC activity"/>
    <property type="evidence" value="ECO:0007669"/>
    <property type="project" value="UniProtKB-UniRule"/>
</dbReference>
<dbReference type="GO" id="GO:0006289">
    <property type="term" value="P:nucleotide-excision repair"/>
    <property type="evidence" value="ECO:0007669"/>
    <property type="project" value="UniProtKB-UniRule"/>
</dbReference>
<dbReference type="GO" id="GO:0009432">
    <property type="term" value="P:SOS response"/>
    <property type="evidence" value="ECO:0007669"/>
    <property type="project" value="UniProtKB-UniRule"/>
</dbReference>
<dbReference type="CDD" id="cd10434">
    <property type="entry name" value="GIY-YIG_UvrC_Cho"/>
    <property type="match status" value="1"/>
</dbReference>
<dbReference type="FunFam" id="3.30.420.340:FF:000001">
    <property type="entry name" value="UvrABC system protein C"/>
    <property type="match status" value="1"/>
</dbReference>
<dbReference type="FunFam" id="3.40.1440.10:FF:000001">
    <property type="entry name" value="UvrABC system protein C"/>
    <property type="match status" value="1"/>
</dbReference>
<dbReference type="Gene3D" id="1.10.150.20">
    <property type="entry name" value="5' to 3' exonuclease, C-terminal subdomain"/>
    <property type="match status" value="1"/>
</dbReference>
<dbReference type="Gene3D" id="3.40.1440.10">
    <property type="entry name" value="GIY-YIG endonuclease"/>
    <property type="match status" value="1"/>
</dbReference>
<dbReference type="Gene3D" id="4.10.860.10">
    <property type="entry name" value="UVR domain"/>
    <property type="match status" value="1"/>
</dbReference>
<dbReference type="Gene3D" id="3.30.420.340">
    <property type="entry name" value="UvrC, RNAse H endonuclease domain"/>
    <property type="match status" value="1"/>
</dbReference>
<dbReference type="HAMAP" id="MF_00203">
    <property type="entry name" value="UvrC"/>
    <property type="match status" value="1"/>
</dbReference>
<dbReference type="InterPro" id="IPR000305">
    <property type="entry name" value="GIY-YIG_endonuc"/>
</dbReference>
<dbReference type="InterPro" id="IPR035901">
    <property type="entry name" value="GIY-YIG_endonuc_sf"/>
</dbReference>
<dbReference type="InterPro" id="IPR047296">
    <property type="entry name" value="GIY-YIG_UvrC_Cho"/>
</dbReference>
<dbReference type="InterPro" id="IPR003583">
    <property type="entry name" value="Hlx-hairpin-Hlx_DNA-bd_motif"/>
</dbReference>
<dbReference type="InterPro" id="IPR010994">
    <property type="entry name" value="RuvA_2-like"/>
</dbReference>
<dbReference type="InterPro" id="IPR001943">
    <property type="entry name" value="UVR_dom"/>
</dbReference>
<dbReference type="InterPro" id="IPR036876">
    <property type="entry name" value="UVR_dom_sf"/>
</dbReference>
<dbReference type="InterPro" id="IPR050066">
    <property type="entry name" value="UvrABC_protein_C"/>
</dbReference>
<dbReference type="InterPro" id="IPR004791">
    <property type="entry name" value="UvrC"/>
</dbReference>
<dbReference type="InterPro" id="IPR001162">
    <property type="entry name" value="UvrC_RNase_H_dom"/>
</dbReference>
<dbReference type="InterPro" id="IPR038476">
    <property type="entry name" value="UvrC_RNase_H_dom_sf"/>
</dbReference>
<dbReference type="NCBIfam" id="NF001824">
    <property type="entry name" value="PRK00558.1-5"/>
    <property type="match status" value="1"/>
</dbReference>
<dbReference type="NCBIfam" id="TIGR00194">
    <property type="entry name" value="uvrC"/>
    <property type="match status" value="1"/>
</dbReference>
<dbReference type="PANTHER" id="PTHR30562:SF1">
    <property type="entry name" value="UVRABC SYSTEM PROTEIN C"/>
    <property type="match status" value="1"/>
</dbReference>
<dbReference type="PANTHER" id="PTHR30562">
    <property type="entry name" value="UVRC/OXIDOREDUCTASE"/>
    <property type="match status" value="1"/>
</dbReference>
<dbReference type="Pfam" id="PF01541">
    <property type="entry name" value="GIY-YIG"/>
    <property type="match status" value="1"/>
</dbReference>
<dbReference type="Pfam" id="PF14520">
    <property type="entry name" value="HHH_5"/>
    <property type="match status" value="1"/>
</dbReference>
<dbReference type="Pfam" id="PF02151">
    <property type="entry name" value="UVR"/>
    <property type="match status" value="1"/>
</dbReference>
<dbReference type="Pfam" id="PF22920">
    <property type="entry name" value="UvrC_RNaseH"/>
    <property type="match status" value="2"/>
</dbReference>
<dbReference type="Pfam" id="PF08459">
    <property type="entry name" value="UvrC_RNaseH_dom"/>
    <property type="match status" value="1"/>
</dbReference>
<dbReference type="SMART" id="SM00465">
    <property type="entry name" value="GIYc"/>
    <property type="match status" value="1"/>
</dbReference>
<dbReference type="SMART" id="SM00278">
    <property type="entry name" value="HhH1"/>
    <property type="match status" value="2"/>
</dbReference>
<dbReference type="SUPFAM" id="SSF46600">
    <property type="entry name" value="C-terminal UvrC-binding domain of UvrB"/>
    <property type="match status" value="1"/>
</dbReference>
<dbReference type="SUPFAM" id="SSF82771">
    <property type="entry name" value="GIY-YIG endonuclease"/>
    <property type="match status" value="1"/>
</dbReference>
<dbReference type="SUPFAM" id="SSF47781">
    <property type="entry name" value="RuvA domain 2-like"/>
    <property type="match status" value="1"/>
</dbReference>
<dbReference type="PROSITE" id="PS50164">
    <property type="entry name" value="GIY_YIG"/>
    <property type="match status" value="1"/>
</dbReference>
<dbReference type="PROSITE" id="PS50151">
    <property type="entry name" value="UVR"/>
    <property type="match status" value="1"/>
</dbReference>
<dbReference type="PROSITE" id="PS50165">
    <property type="entry name" value="UVRC"/>
    <property type="match status" value="1"/>
</dbReference>
<reference key="1">
    <citation type="journal article" date="2010" name="Genome Biol. Evol.">
        <title>Continuing evolution of Burkholderia mallei through genome reduction and large-scale rearrangements.</title>
        <authorList>
            <person name="Losada L."/>
            <person name="Ronning C.M."/>
            <person name="DeShazer D."/>
            <person name="Woods D."/>
            <person name="Fedorova N."/>
            <person name="Kim H.S."/>
            <person name="Shabalina S.A."/>
            <person name="Pearson T.R."/>
            <person name="Brinkac L."/>
            <person name="Tan P."/>
            <person name="Nandi T."/>
            <person name="Crabtree J."/>
            <person name="Badger J."/>
            <person name="Beckstrom-Sternberg S."/>
            <person name="Saqib M."/>
            <person name="Schutzer S.E."/>
            <person name="Keim P."/>
            <person name="Nierman W.C."/>
        </authorList>
    </citation>
    <scope>NUCLEOTIDE SEQUENCE [LARGE SCALE GENOMIC DNA]</scope>
    <source>
        <strain>1106a</strain>
    </source>
</reference>
<sequence length="747" mass="80808">MTSPDAPESRFEPKPILAQLPHLPGVYRYYDAQDAVLYVGKARDLKKRVSSYFTKTQLSPRIAMMITRIARIETTVTRSEAEALLLENNLIKALAPRYNILFRDDKSYPYLKLTGHRFPRMAYYRGAVDKKNQYFGPFPSAWAVRESIQILQRVFQLRTCEDSVFNNRTRPCLLHQIGRCSAPCVGAIGEEDYARDVDNASRFLLGRQGEVMGELERKMHAFAAELKFEQAAAVRNQMSSLAKVLHQQAIDVGGDSDVDILAVVAQGGRVCVNLAMVRGGRHLGDKAYFPAHVETALALAGDIEALAGEGAGDGVQAAAQPAQAPLATDADATDAAATEAKTVTAAAAARAGARTAQAAGARAAASAEGDVERRAEGETHARADAREAAALPDGAAAAQEADADVDAAPLETEVLEAFIAQHYLGNRVPPVLVVSHAPANRELIDLLVEQAGHKVAVVRQPQGQKRAWLTMAEQNARLALARLLSEQGSQQARTRSLADVLGYESDDLAQLRIECFDISHTMGEATQASCVVYHHHRMQSSEYRRYNIAGITPGDDYAAMRQVLTRRYEKMVEEAAAEASADEAAGIDGNAVHAAASAGRLPNVVLIDGGRGQVEIARQVFSELGLDISMLVGVAKGEGRKVGLETLIFADGRAPLELGKESAALMLVAQIRDEAHRFAITGMRAKRAKTRQTSRLEELEGVGAKRRQRLLARFGGLRGVVAASVDELASVEGISRALAEQIYRQLH</sequence>